<evidence type="ECO:0000250" key="1"/>
<evidence type="ECO:0000255" key="2">
    <source>
        <dbReference type="PROSITE-ProRule" id="PRU00192"/>
    </source>
</evidence>
<evidence type="ECO:0000256" key="3">
    <source>
        <dbReference type="SAM" id="MobiDB-lite"/>
    </source>
</evidence>
<evidence type="ECO:0000269" key="4">
    <source>
    </source>
</evidence>
<evidence type="ECO:0000269" key="5">
    <source>
    </source>
</evidence>
<evidence type="ECO:0000269" key="6">
    <source>
    </source>
</evidence>
<evidence type="ECO:0000269" key="7">
    <source>
    </source>
</evidence>
<evidence type="ECO:0000269" key="8">
    <source>
    </source>
</evidence>
<evidence type="ECO:0000305" key="9"/>
<evidence type="ECO:0007744" key="10">
    <source>
    </source>
</evidence>
<evidence type="ECO:0007744" key="11">
    <source>
    </source>
</evidence>
<evidence type="ECO:0007744" key="12">
    <source>
    </source>
</evidence>
<evidence type="ECO:0007744" key="13">
    <source>
    </source>
</evidence>
<keyword id="KW-0007">Acetylation</keyword>
<keyword id="KW-0963">Cytoplasm</keyword>
<keyword id="KW-0206">Cytoskeleton</keyword>
<keyword id="KW-1017">Isopeptide bond</keyword>
<keyword id="KW-0539">Nucleus</keyword>
<keyword id="KW-0597">Phosphoprotein</keyword>
<keyword id="KW-1185">Reference proteome</keyword>
<keyword id="KW-0728">SH3 domain</keyword>
<keyword id="KW-0832">Ubl conjugation</keyword>
<comment type="function">
    <text evidence="4">Involved in resistance to EDTA.</text>
</comment>
<comment type="subunit">
    <text evidence="5 7 8">Interacts with LAS17, RSP5 and SUP35.</text>
</comment>
<comment type="interaction">
    <interactant intactId="EBI-23329">
        <id>P53281</id>
    </interactant>
    <interactant intactId="EBI-32973">
        <id>Q12168</id>
        <label>ACF2</label>
    </interactant>
    <organismsDiffer>false</organismsDiffer>
    <experiments>4</experiments>
</comment>
<comment type="interaction">
    <interactant intactId="EBI-23329">
        <id>P53281</id>
    </interactant>
    <interactant intactId="EBI-25376">
        <id>P40563</id>
        <label>AIM21</label>
    </interactant>
    <organismsDiffer>false</organismsDiffer>
    <experiments>5</experiments>
</comment>
<comment type="interaction">
    <interactant intactId="EBI-23329">
        <id>P53281</id>
    </interactant>
    <interactant intactId="EBI-21584">
        <id>P38266</id>
        <label>AIM3</label>
    </interactant>
    <organismsDiffer>false</organismsDiffer>
    <experiments>3</experiments>
</comment>
<comment type="interaction">
    <interactant intactId="EBI-23329">
        <id>P53281</id>
    </interactant>
    <interactant intactId="EBI-28798">
        <id>P53933</id>
        <label>APP1</label>
    </interactant>
    <organismsDiffer>false</organismsDiffer>
    <experiments>4</experiments>
</comment>
<comment type="interaction">
    <interactant intactId="EBI-23329">
        <id>P53281</id>
    </interactant>
    <interactant intactId="EBI-27427">
        <id>Q04322</id>
        <label>GYL1</label>
    </interactant>
    <organismsDiffer>false</organismsDiffer>
    <experiments>2</experiments>
</comment>
<comment type="interaction">
    <interactant intactId="EBI-23329">
        <id>P53281</id>
    </interactant>
    <interactant intactId="EBI-35523">
        <id>Q06449</id>
        <label>PIN3</label>
    </interactant>
    <organismsDiffer>false</organismsDiffer>
    <experiments>3</experiments>
</comment>
<comment type="interaction">
    <interactant intactId="EBI-23329">
        <id>P53281</id>
    </interactant>
    <interactant intactId="EBI-16219">
        <id>P39940</id>
        <label>RSP5</label>
    </interactant>
    <organismsDiffer>false</organismsDiffer>
    <experiments>2</experiments>
</comment>
<comment type="subcellular location">
    <subcellularLocation>
        <location>Cytoplasm</location>
    </subcellularLocation>
    <subcellularLocation>
        <location>Nucleus</location>
    </subcellularLocation>
    <subcellularLocation>
        <location>Cytoplasm</location>
        <location>Cytoskeleton</location>
        <location>Actin patch</location>
    </subcellularLocation>
</comment>
<comment type="domain">
    <text evidence="1">The PY motif is recognized directly by the WW domains of RSP5.</text>
</comment>
<comment type="PTM">
    <text evidence="6 8">Ubiquitinated by RSP5.</text>
</comment>
<comment type="similarity">
    <text evidence="9">Belongs to the LSB1 family.</text>
</comment>
<protein>
    <recommendedName>
        <fullName>LAS seventeen-binding protein 1</fullName>
        <shortName>LAS17-binding protein 1</shortName>
    </recommendedName>
</protein>
<organism>
    <name type="scientific">Saccharomyces cerevisiae (strain ATCC 204508 / S288c)</name>
    <name type="common">Baker's yeast</name>
    <dbReference type="NCBI Taxonomy" id="559292"/>
    <lineage>
        <taxon>Eukaryota</taxon>
        <taxon>Fungi</taxon>
        <taxon>Dikarya</taxon>
        <taxon>Ascomycota</taxon>
        <taxon>Saccharomycotina</taxon>
        <taxon>Saccharomycetes</taxon>
        <taxon>Saccharomycetales</taxon>
        <taxon>Saccharomycetaceae</taxon>
        <taxon>Saccharomyces</taxon>
    </lineage>
</organism>
<accession>P53281</accession>
<accession>D6VUR8</accession>
<name>LSB1_YEAST</name>
<dbReference type="EMBL" id="Z72921">
    <property type="protein sequence ID" value="CAA97149.1"/>
    <property type="molecule type" value="Genomic_DNA"/>
</dbReference>
<dbReference type="EMBL" id="BK006941">
    <property type="protein sequence ID" value="DAA08229.1"/>
    <property type="molecule type" value="Genomic_DNA"/>
</dbReference>
<dbReference type="PIR" id="S64445">
    <property type="entry name" value="S64445"/>
</dbReference>
<dbReference type="RefSeq" id="NP_011652.1">
    <property type="nucleotide sequence ID" value="NM_001181265.1"/>
</dbReference>
<dbReference type="SMR" id="P53281"/>
<dbReference type="BioGRID" id="33384">
    <property type="interactions" value="55"/>
</dbReference>
<dbReference type="DIP" id="DIP-1863N"/>
<dbReference type="FunCoup" id="P53281">
    <property type="interactions" value="164"/>
</dbReference>
<dbReference type="IntAct" id="P53281">
    <property type="interactions" value="37"/>
</dbReference>
<dbReference type="MINT" id="P53281"/>
<dbReference type="STRING" id="4932.YGR136W"/>
<dbReference type="iPTMnet" id="P53281"/>
<dbReference type="PaxDb" id="4932-YGR136W"/>
<dbReference type="PeptideAtlas" id="P53281"/>
<dbReference type="EnsemblFungi" id="YGR136W_mRNA">
    <property type="protein sequence ID" value="YGR136W"/>
    <property type="gene ID" value="YGR136W"/>
</dbReference>
<dbReference type="GeneID" id="853037"/>
<dbReference type="KEGG" id="sce:YGR136W"/>
<dbReference type="AGR" id="SGD:S000003368"/>
<dbReference type="SGD" id="S000003368">
    <property type="gene designation" value="LSB1"/>
</dbReference>
<dbReference type="VEuPathDB" id="FungiDB:YGR136W"/>
<dbReference type="eggNOG" id="KOG3601">
    <property type="taxonomic scope" value="Eukaryota"/>
</dbReference>
<dbReference type="GeneTree" id="ENSGT00950000182882"/>
<dbReference type="HOGENOM" id="CLU_064525_2_0_1"/>
<dbReference type="InParanoid" id="P53281"/>
<dbReference type="OMA" id="EWWKGRN"/>
<dbReference type="OrthoDB" id="6250593at2759"/>
<dbReference type="BioCyc" id="YEAST:G3O-30842-MONOMER"/>
<dbReference type="Reactome" id="R-SCE-9013420">
    <property type="pathway name" value="RHOU GTPase cycle"/>
</dbReference>
<dbReference type="BioGRID-ORCS" id="853037">
    <property type="hits" value="1 hit in 10 CRISPR screens"/>
</dbReference>
<dbReference type="PRO" id="PR:P53281"/>
<dbReference type="Proteomes" id="UP000002311">
    <property type="component" value="Chromosome VII"/>
</dbReference>
<dbReference type="RNAct" id="P53281">
    <property type="molecule type" value="protein"/>
</dbReference>
<dbReference type="GO" id="GO:0030479">
    <property type="term" value="C:actin cortical patch"/>
    <property type="evidence" value="ECO:0000314"/>
    <property type="project" value="SGD"/>
</dbReference>
<dbReference type="GO" id="GO:0005737">
    <property type="term" value="C:cytoplasm"/>
    <property type="evidence" value="ECO:0000314"/>
    <property type="project" value="SGD"/>
</dbReference>
<dbReference type="GO" id="GO:0005634">
    <property type="term" value="C:nucleus"/>
    <property type="evidence" value="ECO:0007005"/>
    <property type="project" value="SGD"/>
</dbReference>
<dbReference type="GO" id="GO:0034316">
    <property type="term" value="P:negative regulation of Arp2/3 complex-mediated actin nucleation"/>
    <property type="evidence" value="ECO:0000314"/>
    <property type="project" value="CACAO"/>
</dbReference>
<dbReference type="CDD" id="cd00174">
    <property type="entry name" value="SH3"/>
    <property type="match status" value="1"/>
</dbReference>
<dbReference type="FunFam" id="2.30.30.40:FF:000274">
    <property type="entry name" value="[PSI+] inducibility protein 3"/>
    <property type="match status" value="1"/>
</dbReference>
<dbReference type="Gene3D" id="2.30.30.40">
    <property type="entry name" value="SH3 Domains"/>
    <property type="match status" value="1"/>
</dbReference>
<dbReference type="InterPro" id="IPR036028">
    <property type="entry name" value="SH3-like_dom_sf"/>
</dbReference>
<dbReference type="InterPro" id="IPR001452">
    <property type="entry name" value="SH3_domain"/>
</dbReference>
<dbReference type="InterPro" id="IPR050670">
    <property type="entry name" value="STAM"/>
</dbReference>
<dbReference type="PANTHER" id="PTHR45929">
    <property type="entry name" value="JAK PATHWAY SIGNAL TRANSDUCTION ADAPTOR MOLECULE"/>
    <property type="match status" value="1"/>
</dbReference>
<dbReference type="PANTHER" id="PTHR45929:SF7">
    <property type="entry name" value="LAS SEVENTEEN-BINDING PROTEIN 1"/>
    <property type="match status" value="1"/>
</dbReference>
<dbReference type="Pfam" id="PF00018">
    <property type="entry name" value="SH3_1"/>
    <property type="match status" value="1"/>
</dbReference>
<dbReference type="PRINTS" id="PR00499">
    <property type="entry name" value="P67PHOX"/>
</dbReference>
<dbReference type="PRINTS" id="PR00452">
    <property type="entry name" value="SH3DOMAIN"/>
</dbReference>
<dbReference type="SMART" id="SM00326">
    <property type="entry name" value="SH3"/>
    <property type="match status" value="1"/>
</dbReference>
<dbReference type="SUPFAM" id="SSF50044">
    <property type="entry name" value="SH3-domain"/>
    <property type="match status" value="1"/>
</dbReference>
<dbReference type="PROSITE" id="PS50002">
    <property type="entry name" value="SH3"/>
    <property type="match status" value="1"/>
</dbReference>
<proteinExistence type="evidence at protein level"/>
<gene>
    <name type="primary">LSB1</name>
    <name type="ordered locus">YGR136W</name>
</gene>
<feature type="initiator methionine" description="Removed" evidence="13">
    <location>
        <position position="1"/>
    </location>
</feature>
<feature type="chain" id="PRO_0000202825" description="LAS seventeen-binding protein 1">
    <location>
        <begin position="2"/>
        <end position="241"/>
    </location>
</feature>
<feature type="domain" description="SH3" evidence="2">
    <location>
        <begin position="53"/>
        <end position="112"/>
    </location>
</feature>
<feature type="region of interest" description="Disordered" evidence="3">
    <location>
        <begin position="118"/>
        <end position="213"/>
    </location>
</feature>
<feature type="short sequence motif" description="PY motif">
    <location>
        <begin position="135"/>
        <end position="138"/>
    </location>
</feature>
<feature type="compositionally biased region" description="Low complexity" evidence="3">
    <location>
        <begin position="118"/>
        <end position="131"/>
    </location>
</feature>
<feature type="compositionally biased region" description="Pro residues" evidence="3">
    <location>
        <begin position="163"/>
        <end position="179"/>
    </location>
</feature>
<feature type="compositionally biased region" description="Low complexity" evidence="3">
    <location>
        <begin position="180"/>
        <end position="213"/>
    </location>
</feature>
<feature type="modified residue" description="N-acetylserine" evidence="13">
    <location>
        <position position="2"/>
    </location>
</feature>
<feature type="modified residue" description="Phosphoserine" evidence="11">
    <location>
        <position position="48"/>
    </location>
</feature>
<feature type="modified residue" description="Phosphoserine" evidence="10">
    <location>
        <position position="114"/>
    </location>
</feature>
<feature type="modified residue" description="Phosphoserine" evidence="10">
    <location>
        <position position="116"/>
    </location>
</feature>
<feature type="cross-link" description="Glycyl lysine isopeptide (Lys-Gly) (interchain with G-Cter in ubiquitin)" evidence="12">
    <location>
        <position position="41"/>
    </location>
</feature>
<feature type="cross-link" description="Glycyl lysine isopeptide (Lys-Gly) (interchain with G-Cter in ubiquitin)" evidence="12">
    <location>
        <position position="79"/>
    </location>
</feature>
<feature type="cross-link" description="Glycyl lysine isopeptide (Lys-Gly) (interchain with G-Cter in ubiquitin)" evidence="12">
    <location>
        <position position="118"/>
    </location>
</feature>
<feature type="cross-link" description="Glycyl lysine isopeptide (Lys-Gly) (interchain with G-Cter in ubiquitin)" evidence="12">
    <location>
        <position position="219"/>
    </location>
</feature>
<feature type="mutagenesis site" description="Abolishes interaction with LAS17, but not with SUP35. Blocks colocalization with actin." evidence="7">
    <original>W</original>
    <variation>S</variation>
    <location>
        <position position="90"/>
    </location>
</feature>
<sequence>MSASLVNRSLKNIRNELEFLKESNVISGDIFELINSKLPEKWDGNQRSPQNADTEEYVEALYDFEAQQDGDLSLKTGDKIQVLEKISPDWYRGKSNNKIGIFPANYVKPAFTRSASPKSAEAASSSTVSRPSVPPPSYEPAASQYPSQQVSAPYAPPAGYMQAPPPQQQQAPLPYPPPFTNYYQQPQQQYAPPSQQAPVEAQPQQSSGASSAFKSFGSKLGNAAIFGAGSAIGSDIVNSIF</sequence>
<reference key="1">
    <citation type="journal article" date="1997" name="Nature">
        <title>The nucleotide sequence of Saccharomyces cerevisiae chromosome VII.</title>
        <authorList>
            <person name="Tettelin H."/>
            <person name="Agostoni-Carbone M.L."/>
            <person name="Albermann K."/>
            <person name="Albers M."/>
            <person name="Arroyo J."/>
            <person name="Backes U."/>
            <person name="Barreiros T."/>
            <person name="Bertani I."/>
            <person name="Bjourson A.J."/>
            <person name="Brueckner M."/>
            <person name="Bruschi C.V."/>
            <person name="Carignani G."/>
            <person name="Castagnoli L."/>
            <person name="Cerdan E."/>
            <person name="Clemente M.L."/>
            <person name="Coblenz A."/>
            <person name="Coglievina M."/>
            <person name="Coissac E."/>
            <person name="Defoor E."/>
            <person name="Del Bino S."/>
            <person name="Delius H."/>
            <person name="Delneri D."/>
            <person name="de Wergifosse P."/>
            <person name="Dujon B."/>
            <person name="Durand P."/>
            <person name="Entian K.-D."/>
            <person name="Eraso P."/>
            <person name="Escribano V."/>
            <person name="Fabiani L."/>
            <person name="Fartmann B."/>
            <person name="Feroli F."/>
            <person name="Feuermann M."/>
            <person name="Frontali L."/>
            <person name="Garcia-Gonzalez M."/>
            <person name="Garcia-Saez M.I."/>
            <person name="Goffeau A."/>
            <person name="Guerreiro P."/>
            <person name="Hani J."/>
            <person name="Hansen M."/>
            <person name="Hebling U."/>
            <person name="Hernandez K."/>
            <person name="Heumann K."/>
            <person name="Hilger F."/>
            <person name="Hofmann B."/>
            <person name="Indge K.J."/>
            <person name="James C.M."/>
            <person name="Klima R."/>
            <person name="Koetter P."/>
            <person name="Kramer B."/>
            <person name="Kramer W."/>
            <person name="Lauquin G."/>
            <person name="Leuther H."/>
            <person name="Louis E.J."/>
            <person name="Maillier E."/>
            <person name="Marconi A."/>
            <person name="Martegani E."/>
            <person name="Mazon M.J."/>
            <person name="Mazzoni C."/>
            <person name="McReynolds A.D.K."/>
            <person name="Melchioretto P."/>
            <person name="Mewes H.-W."/>
            <person name="Minenkova O."/>
            <person name="Mueller-Auer S."/>
            <person name="Nawrocki A."/>
            <person name="Netter P."/>
            <person name="Neu R."/>
            <person name="Nombela C."/>
            <person name="Oliver S.G."/>
            <person name="Panzeri L."/>
            <person name="Paoluzi S."/>
            <person name="Plevani P."/>
            <person name="Portetelle D."/>
            <person name="Portillo F."/>
            <person name="Potier S."/>
            <person name="Purnelle B."/>
            <person name="Rieger M."/>
            <person name="Riles L."/>
            <person name="Rinaldi T."/>
            <person name="Robben J."/>
            <person name="Rodrigues-Pousada C."/>
            <person name="Rodriguez-Belmonte E."/>
            <person name="Rodriguez-Torres A.M."/>
            <person name="Rose M."/>
            <person name="Ruzzi M."/>
            <person name="Saliola M."/>
            <person name="Sanchez-Perez M."/>
            <person name="Schaefer B."/>
            <person name="Schaefer M."/>
            <person name="Scharfe M."/>
            <person name="Schmidheini T."/>
            <person name="Schreer A."/>
            <person name="Skala J."/>
            <person name="Souciet J.-L."/>
            <person name="Steensma H.Y."/>
            <person name="Talla E."/>
            <person name="Thierry A."/>
            <person name="Vandenbol M."/>
            <person name="van der Aart Q.J.M."/>
            <person name="Van Dyck L."/>
            <person name="Vanoni M."/>
            <person name="Verhasselt P."/>
            <person name="Voet M."/>
            <person name="Volckaert G."/>
            <person name="Wambutt R."/>
            <person name="Watson M.D."/>
            <person name="Weber N."/>
            <person name="Wedler E."/>
            <person name="Wedler H."/>
            <person name="Wipfli P."/>
            <person name="Wolf K."/>
            <person name="Wright L.F."/>
            <person name="Zaccaria P."/>
            <person name="Zimmermann M."/>
            <person name="Zollner A."/>
            <person name="Kleine K."/>
        </authorList>
    </citation>
    <scope>NUCLEOTIDE SEQUENCE [LARGE SCALE GENOMIC DNA]</scope>
    <source>
        <strain>ATCC 204508 / S288c</strain>
    </source>
</reference>
<reference key="2">
    <citation type="journal article" date="2014" name="G3 (Bethesda)">
        <title>The reference genome sequence of Saccharomyces cerevisiae: Then and now.</title>
        <authorList>
            <person name="Engel S.R."/>
            <person name="Dietrich F.S."/>
            <person name="Fisk D.G."/>
            <person name="Binkley G."/>
            <person name="Balakrishnan R."/>
            <person name="Costanzo M.C."/>
            <person name="Dwight S.S."/>
            <person name="Hitz B.C."/>
            <person name="Karra K."/>
            <person name="Nash R.S."/>
            <person name="Weng S."/>
            <person name="Wong E.D."/>
            <person name="Lloyd P."/>
            <person name="Skrzypek M.S."/>
            <person name="Miyasato S.R."/>
            <person name="Simison M."/>
            <person name="Cherry J.M."/>
        </authorList>
    </citation>
    <scope>GENOME REANNOTATION</scope>
    <source>
        <strain>ATCC 204508 / S288c</strain>
    </source>
</reference>
<reference key="3">
    <citation type="journal article" date="1999" name="Mol. Biol. Cell">
        <title>The Saccharomyces cerevisiae homologue of human Wiskott-Aldrich syndrome protein Las17p interacts with the Arp2/3 complex.</title>
        <authorList>
            <person name="Madania A."/>
            <person name="Dumoulin P."/>
            <person name="Grava S."/>
            <person name="Kitamoto H."/>
            <person name="Scharer-Brodbeck C."/>
            <person name="Soulard A."/>
            <person name="Moreau V."/>
            <person name="Winsor B."/>
        </authorList>
    </citation>
    <scope>INTERACTION WITH LAS17</scope>
</reference>
<reference key="4">
    <citation type="journal article" date="1999" name="Yeast">
        <title>Chemotyping of yeast mutants using robotics.</title>
        <authorList>
            <person name="Rieger K.-J."/>
            <person name="El-Alama M."/>
            <person name="Stein G."/>
            <person name="Bradshaw C."/>
            <person name="Slonimski P.P."/>
            <person name="Maundrell K."/>
        </authorList>
    </citation>
    <scope>FUNCTION</scope>
</reference>
<reference key="5">
    <citation type="journal article" date="2003" name="Nature">
        <title>Global analysis of protein localization in budding yeast.</title>
        <authorList>
            <person name="Huh W.-K."/>
            <person name="Falvo J.V."/>
            <person name="Gerke L.C."/>
            <person name="Carroll A.S."/>
            <person name="Howson R.W."/>
            <person name="Weissman J.S."/>
            <person name="O'Shea E.K."/>
        </authorList>
    </citation>
    <scope>SUBCELLULAR LOCATION [LARGE SCALE ANALYSIS]</scope>
</reference>
<reference key="6">
    <citation type="journal article" date="2003" name="Nat. Biotechnol.">
        <title>A proteomics approach to understanding protein ubiquitination.</title>
        <authorList>
            <person name="Peng J."/>
            <person name="Schwartz D."/>
            <person name="Elias J.E."/>
            <person name="Thoreen C.C."/>
            <person name="Cheng D."/>
            <person name="Marsischky G."/>
            <person name="Roelofs J."/>
            <person name="Finley D."/>
            <person name="Gygi S.P."/>
        </authorList>
    </citation>
    <scope>UBIQUITINATION [LARGE SCALE ANALYSIS] AT LYS-41 AND LYS-79</scope>
    <scope>IDENTIFICATION BY MASS SPECTROMETRY</scope>
    <source>
        <strain>SUB592</strain>
    </source>
</reference>
<reference key="7">
    <citation type="journal article" date="2003" name="Proc. Natl. Acad. Sci. U.S.A.">
        <title>A subset of membrane-associated proteins is ubiquitinated in response to mutations in the endoplasmic reticulum degradation machinery.</title>
        <authorList>
            <person name="Hitchcock A.L."/>
            <person name="Auld K."/>
            <person name="Gygi S.P."/>
            <person name="Silver P.A."/>
        </authorList>
    </citation>
    <scope>UBIQUITINATION [LARGE SCALE ANALYSIS] AT LYS-41 AND LYS-79</scope>
    <scope>IDENTIFICATION BY MASS SPECTROMETRY</scope>
</reference>
<reference key="8">
    <citation type="journal article" date="2007" name="Mol. Syst. Biol.">
        <title>Ubiquitination screen using protein microarrays for comprehensive identification of Rsp5 substrates in yeast.</title>
        <authorList>
            <person name="Gupta R."/>
            <person name="Kus B."/>
            <person name="Fladd C."/>
            <person name="Wasmuth J."/>
            <person name="Tonikian R."/>
            <person name="Sidhu S."/>
            <person name="Krogan N.J."/>
            <person name="Parkinson J."/>
            <person name="Rotin D."/>
        </authorList>
    </citation>
    <scope>UBIQUITINATION BY RSP5</scope>
</reference>
<reference key="9">
    <citation type="journal article" date="2007" name="Proc. Natl. Acad. Sci. U.S.A.">
        <title>Analysis of phosphorylation sites on proteins from Saccharomyces cerevisiae by electron transfer dissociation (ETD) mass spectrometry.</title>
        <authorList>
            <person name="Chi A."/>
            <person name="Huttenhower C."/>
            <person name="Geer L.Y."/>
            <person name="Coon J.J."/>
            <person name="Syka J.E.P."/>
            <person name="Bai D.L."/>
            <person name="Shabanowitz J."/>
            <person name="Burke D.J."/>
            <person name="Troyanskaya O.G."/>
            <person name="Hunt D.F."/>
        </authorList>
    </citation>
    <scope>PHOSPHORYLATION [LARGE SCALE ANALYSIS] AT SER-114 AND SER-116</scope>
    <scope>IDENTIFICATION BY MASS SPECTROMETRY [LARGE SCALE ANALYSIS]</scope>
</reference>
<reference key="10">
    <citation type="journal article" date="2008" name="Mol. Cell. Proteomics">
        <title>A multidimensional chromatography technology for in-depth phosphoproteome analysis.</title>
        <authorList>
            <person name="Albuquerque C.P."/>
            <person name="Smolka M.B."/>
            <person name="Payne S.H."/>
            <person name="Bafna V."/>
            <person name="Eng J."/>
            <person name="Zhou H."/>
        </authorList>
    </citation>
    <scope>PHOSPHORYLATION [LARGE SCALE ANALYSIS] AT SER-48</scope>
    <scope>IDENTIFICATION BY MASS SPECTROMETRY [LARGE SCALE ANALYSIS]</scope>
</reference>
<reference key="11">
    <citation type="journal article" date="2011" name="Eur. J. Cell Biol.">
        <title>Yeast Rsp5 ubiquitin ligase affects the actin cytoskeleton in vivo and in vitro.</title>
        <authorList>
            <person name="Kaminska J."/>
            <person name="Spiess M."/>
            <person name="Stawiecka-Mirota M."/>
            <person name="Monkaityte R."/>
            <person name="Haguenauer-Tsapis R."/>
            <person name="Urban-Grimal D."/>
            <person name="Winsor B."/>
            <person name="Zoladek T."/>
        </authorList>
    </citation>
    <scope>UBIQUITINATION BY RSP5</scope>
    <scope>INTERACTION WITH RSP5</scope>
</reference>
<reference key="12">
    <citation type="journal article" date="2011" name="Mol. Cell">
        <title>Prion induction by the short-lived, stress-induced protein Lsb2 is regulated by ubiquitination and association with the actin cytoskeleton.</title>
        <authorList>
            <person name="Chernova T.A."/>
            <person name="Romanyuk A.V."/>
            <person name="Karpova T.S."/>
            <person name="Shanks J.R."/>
            <person name="Ali M."/>
            <person name="Moffatt N."/>
            <person name="Howie R.L."/>
            <person name="O'Dell A."/>
            <person name="McNally J.G."/>
            <person name="Liebman S.W."/>
            <person name="Chernoff Y.O."/>
            <person name="Wilkinson K.D."/>
        </authorList>
    </citation>
    <scope>SUBCELLULAR LOCATION</scope>
    <scope>MUTAGENESIS OF TRP-90</scope>
    <scope>INTERACTION WITH LAS17 AND SUP35</scope>
</reference>
<reference key="13">
    <citation type="journal article" date="2012" name="Proc. Natl. Acad. Sci. U.S.A.">
        <title>N-terminal acetylome analyses and functional insights of the N-terminal acetyltransferase NatB.</title>
        <authorList>
            <person name="Van Damme P."/>
            <person name="Lasa M."/>
            <person name="Polevoda B."/>
            <person name="Gazquez C."/>
            <person name="Elosegui-Artola A."/>
            <person name="Kim D.S."/>
            <person name="De Juan-Pardo E."/>
            <person name="Demeyer K."/>
            <person name="Hole K."/>
            <person name="Larrea E."/>
            <person name="Timmerman E."/>
            <person name="Prieto J."/>
            <person name="Arnesen T."/>
            <person name="Sherman F."/>
            <person name="Gevaert K."/>
            <person name="Aldabe R."/>
        </authorList>
    </citation>
    <scope>ACETYLATION [LARGE SCALE ANALYSIS] AT SER-2</scope>
    <scope>CLEAVAGE OF INITIATOR METHIONINE [LARGE SCALE ANALYSIS]</scope>
    <scope>IDENTIFICATION BY MASS SPECTROMETRY [LARGE SCALE ANALYSIS]</scope>
</reference>
<reference key="14">
    <citation type="journal article" date="2012" name="Proteomics">
        <title>Sites of ubiquitin attachment in Saccharomyces cerevisiae.</title>
        <authorList>
            <person name="Starita L.M."/>
            <person name="Lo R.S."/>
            <person name="Eng J.K."/>
            <person name="von Haller P.D."/>
            <person name="Fields S."/>
        </authorList>
    </citation>
    <scope>UBIQUITINATION [LARGE SCALE ANALYSIS] AT LYS-41; LYS-79; LYS-118 AND LYS-219</scope>
    <scope>IDENTIFICATION BY MASS SPECTROMETRY [LARGE SCALE ANALYSIS]</scope>
</reference>